<name>BAN_ARATH</name>
<evidence type="ECO:0000250" key="1">
    <source>
        <dbReference type="UniProtKB" id="A0A059TC02"/>
    </source>
</evidence>
<evidence type="ECO:0000269" key="2">
    <source>
    </source>
</evidence>
<evidence type="ECO:0000269" key="3">
    <source>
    </source>
</evidence>
<evidence type="ECO:0000269" key="4">
    <source>
    </source>
</evidence>
<evidence type="ECO:0000303" key="5">
    <source>
    </source>
</evidence>
<evidence type="ECO:0000305" key="6"/>
<sequence>MDQTLTHTGSKKACVIGGTGNLASILIKHLLQSGYKVNTTVRDPENEKKIAHLRKLQELGDLKIFKADLTDEDSFESSFSGCEYIFHVATPINFKSEDPEKDMIKPAIQGVINVLKSCLKSKSVKRVIYTSSAAAVSINNLSGTGIVMNEENWTDVEFLTEEKPFNWGYPISKVLAEKTAWEFAKENKINLVTVIPALIAGNSLLSDPPSSLSLSMSFITGKEMHVTGLKEMQKLSGSISFVHVDDLARAHLFLAEKETASGRYICCAYNTSVPEIADFLIQRYPKYNVLSEFEEGLSIPKLTLSSQKLINEGFRFEYGINEMYDQMIEYFESKGLIKAK</sequence>
<keyword id="KW-0284">Flavonoid biosynthesis</keyword>
<keyword id="KW-0520">NAD</keyword>
<keyword id="KW-0521">NADP</keyword>
<keyword id="KW-0560">Oxidoreductase</keyword>
<keyword id="KW-1185">Reference proteome</keyword>
<feature type="chain" id="PRO_0000215574" description="Anthocyanidin reductase">
    <location>
        <begin position="1"/>
        <end position="340"/>
    </location>
</feature>
<feature type="binding site" evidence="1">
    <location>
        <position position="49"/>
    </location>
    <ligand>
        <name>NADP(+)</name>
        <dbReference type="ChEBI" id="CHEBI:58349"/>
    </ligand>
</feature>
<feature type="binding site" evidence="1">
    <location>
        <position position="169"/>
    </location>
    <ligand>
        <name>NADP(+)</name>
        <dbReference type="ChEBI" id="CHEBI:58349"/>
    </ligand>
</feature>
<feature type="sequence variant" description="In strain: cv. Wassilewskija.">
    <original>K</original>
    <variation>KES</variation>
    <location>
        <position position="340"/>
    </location>
</feature>
<feature type="sequence conflict" description="In Ref. 1; AAF23859." evidence="6" ref="1">
    <original>K</original>
    <variation>Q</variation>
    <location>
        <position position="55"/>
    </location>
</feature>
<feature type="sequence conflict" description="In Ref. 1; AAF23859." evidence="6" ref="1">
    <original>I</original>
    <variation>L</variation>
    <location>
        <position position="146"/>
    </location>
</feature>
<feature type="sequence conflict" description="In Ref. 1; AAF23859." evidence="6" ref="1">
    <original>VE</original>
    <variation>ID</variation>
    <location>
        <begin position="156"/>
        <end position="157"/>
    </location>
</feature>
<feature type="sequence conflict" description="In Ref. 1; AAF23859." evidence="6" ref="1">
    <original>T</original>
    <variation>K</variation>
    <location>
        <position position="179"/>
    </location>
</feature>
<feature type="sequence conflict" description="In Ref. 1; AAF23859." evidence="6" ref="1">
    <original>K</original>
    <variation>E</variation>
    <location>
        <position position="185"/>
    </location>
</feature>
<comment type="function">
    <text evidence="3 4">Involved in the biosynthesis of condensed tannins. Converts cyanidin into (-)-epicatechin as the major product.</text>
</comment>
<comment type="catalytic activity">
    <reaction evidence="3 4">
        <text>a (2R,3R)-flavan-3-ol + 2 NAD(+) = an anthocyanidin with a 3-hydroxy group + 2 NADH + 2 H(+)</text>
        <dbReference type="Rhea" id="RHEA:11640"/>
        <dbReference type="ChEBI" id="CHEBI:15378"/>
        <dbReference type="ChEBI" id="CHEBI:57540"/>
        <dbReference type="ChEBI" id="CHEBI:57945"/>
        <dbReference type="ChEBI" id="CHEBI:134086"/>
        <dbReference type="ChEBI" id="CHEBI:134087"/>
        <dbReference type="EC" id="1.3.1.77"/>
    </reaction>
</comment>
<comment type="catalytic activity">
    <reaction evidence="3 4">
        <text>a (2R,3R)-flavan-3-ol + 2 NADP(+) = an anthocyanidin with a 3-hydroxy group + 2 NADPH + 2 H(+)</text>
        <dbReference type="Rhea" id="RHEA:11644"/>
        <dbReference type="ChEBI" id="CHEBI:15378"/>
        <dbReference type="ChEBI" id="CHEBI:57783"/>
        <dbReference type="ChEBI" id="CHEBI:58349"/>
        <dbReference type="ChEBI" id="CHEBI:134086"/>
        <dbReference type="ChEBI" id="CHEBI:134087"/>
        <dbReference type="EC" id="1.3.1.77"/>
    </reaction>
</comment>
<comment type="activity regulation">
    <text evidence="4">Inhibited by (+)-catechin, quercetin and (+)- and (-)-dihydroquercetin. Not inhibited by salt. Positive cooperativity with NADPH acting as cosubstrate and modulator.</text>
</comment>
<comment type="biophysicochemical properties">
    <kinetics>
        <KM evidence="4">73.9 uM for cyanidin</KM>
        <KM evidence="4">52.8 uM for pelargonidin</KM>
        <KM evidence="4">17.8 uM for delphinidin</KM>
        <Vmax evidence="4">10.0 nmol/min/mg enzyme with cyanidin as substrate</Vmax>
        <Vmax evidence="4">0.9 nmol/min/mg enzyme with delphinidin as substrate</Vmax>
        <text>cannot use NADH as cosubstrate.</text>
    </kinetics>
    <phDependence>
        <text evidence="4">Optimum pH is 8.0.</text>
    </phDependence>
    <temperatureDependence>
        <text evidence="4">Optimum temperature is 55 degrees Celsius.</text>
    </temperatureDependence>
</comment>
<comment type="pathway">
    <text>Secondary metabolite biosynthesis; flavonoid biosynthesis.</text>
</comment>
<comment type="subunit">
    <text evidence="6">Homo- or heterodimer.</text>
</comment>
<comment type="tissue specificity">
    <text evidence="2">Flowers and young siliques. Detected specifically in the endothelium of seed coat.</text>
</comment>
<comment type="developmental stage">
    <text>From fertilization until pre-globular embryo stage.</text>
</comment>
<comment type="miscellaneous">
    <text>Regulated by TRANSPARENT TESTA 2, TRANSPARENT TESTA 8 and TRANSPARENT TESTA GLABRA 1.</text>
</comment>
<comment type="similarity">
    <text evidence="6">Belongs to the NAD(P)-dependent epimerase/dehydratase family. Dihydroflavonol-4-reductase subfamily.</text>
</comment>
<accession>Q9SEV0</accession>
<accession>Q1PFH9</accession>
<accession>Q680A7</accession>
<accession>Q9SYA8</accession>
<proteinExistence type="evidence at protein level"/>
<reference key="1">
    <citation type="journal article" date="1999" name="Plant J.">
        <title>The BANYULS gene encodes a DFR-like protein and is a marker of early seed coat development.</title>
        <authorList>
            <person name="Devic M."/>
            <person name="Guilleminot J."/>
            <person name="Debeaujon I."/>
            <person name="Bechtold N."/>
            <person name="Bensaude E."/>
            <person name="Koornneef M."/>
            <person name="Pelletier G."/>
            <person name="Delseny M."/>
        </authorList>
    </citation>
    <scope>NUCLEOTIDE SEQUENCE [MRNA]</scope>
    <scope>DEVELOPMENTAL STAGE</scope>
    <scope>CHARACTERIZATION</scope>
    <source>
        <strain>cv. En-1</strain>
        <strain>cv. Wassilewskija</strain>
        <tissue>Silique</tissue>
    </source>
</reference>
<reference key="2">
    <citation type="journal article" date="2000" name="Nature">
        <title>Sequence and analysis of chromosome 1 of the plant Arabidopsis thaliana.</title>
        <authorList>
            <person name="Theologis A."/>
            <person name="Ecker J.R."/>
            <person name="Palm C.J."/>
            <person name="Federspiel N.A."/>
            <person name="Kaul S."/>
            <person name="White O."/>
            <person name="Alonso J."/>
            <person name="Altafi H."/>
            <person name="Araujo R."/>
            <person name="Bowman C.L."/>
            <person name="Brooks S.Y."/>
            <person name="Buehler E."/>
            <person name="Chan A."/>
            <person name="Chao Q."/>
            <person name="Chen H."/>
            <person name="Cheuk R.F."/>
            <person name="Chin C.W."/>
            <person name="Chung M.K."/>
            <person name="Conn L."/>
            <person name="Conway A.B."/>
            <person name="Conway A.R."/>
            <person name="Creasy T.H."/>
            <person name="Dewar K."/>
            <person name="Dunn P."/>
            <person name="Etgu P."/>
            <person name="Feldblyum T.V."/>
            <person name="Feng J.-D."/>
            <person name="Fong B."/>
            <person name="Fujii C.Y."/>
            <person name="Gill J.E."/>
            <person name="Goldsmith A.D."/>
            <person name="Haas B."/>
            <person name="Hansen N.F."/>
            <person name="Hughes B."/>
            <person name="Huizar L."/>
            <person name="Hunter J.L."/>
            <person name="Jenkins J."/>
            <person name="Johnson-Hopson C."/>
            <person name="Khan S."/>
            <person name="Khaykin E."/>
            <person name="Kim C.J."/>
            <person name="Koo H.L."/>
            <person name="Kremenetskaia I."/>
            <person name="Kurtz D.B."/>
            <person name="Kwan A."/>
            <person name="Lam B."/>
            <person name="Langin-Hooper S."/>
            <person name="Lee A."/>
            <person name="Lee J.M."/>
            <person name="Lenz C.A."/>
            <person name="Li J.H."/>
            <person name="Li Y.-P."/>
            <person name="Lin X."/>
            <person name="Liu S.X."/>
            <person name="Liu Z.A."/>
            <person name="Luros J.S."/>
            <person name="Maiti R."/>
            <person name="Marziali A."/>
            <person name="Militscher J."/>
            <person name="Miranda M."/>
            <person name="Nguyen M."/>
            <person name="Nierman W.C."/>
            <person name="Osborne B.I."/>
            <person name="Pai G."/>
            <person name="Peterson J."/>
            <person name="Pham P.K."/>
            <person name="Rizzo M."/>
            <person name="Rooney T."/>
            <person name="Rowley D."/>
            <person name="Sakano H."/>
            <person name="Salzberg S.L."/>
            <person name="Schwartz J.R."/>
            <person name="Shinn P."/>
            <person name="Southwick A.M."/>
            <person name="Sun H."/>
            <person name="Tallon L.J."/>
            <person name="Tambunga G."/>
            <person name="Toriumi M.J."/>
            <person name="Town C.D."/>
            <person name="Utterback T."/>
            <person name="Van Aken S."/>
            <person name="Vaysberg M."/>
            <person name="Vysotskaia V.S."/>
            <person name="Walker M."/>
            <person name="Wu D."/>
            <person name="Yu G."/>
            <person name="Fraser C.M."/>
            <person name="Venter J.C."/>
            <person name="Davis R.W."/>
        </authorList>
    </citation>
    <scope>NUCLEOTIDE SEQUENCE [LARGE SCALE GENOMIC DNA]</scope>
    <source>
        <strain>cv. Columbia</strain>
    </source>
</reference>
<reference key="3">
    <citation type="journal article" date="2017" name="Plant J.">
        <title>Araport11: a complete reannotation of the Arabidopsis thaliana reference genome.</title>
        <authorList>
            <person name="Cheng C.Y."/>
            <person name="Krishnakumar V."/>
            <person name="Chan A.P."/>
            <person name="Thibaud-Nissen F."/>
            <person name="Schobel S."/>
            <person name="Town C.D."/>
        </authorList>
    </citation>
    <scope>GENOME REANNOTATION</scope>
    <source>
        <strain>cv. Columbia</strain>
    </source>
</reference>
<reference key="4">
    <citation type="journal article" date="2006" name="Plant Biotechnol. J.">
        <title>Simultaneous high-throughput recombinational cloning of open reading frames in closed and open configurations.</title>
        <authorList>
            <person name="Underwood B.A."/>
            <person name="Vanderhaeghen R."/>
            <person name="Whitford R."/>
            <person name="Town C.D."/>
            <person name="Hilson P."/>
        </authorList>
    </citation>
    <scope>NUCLEOTIDE SEQUENCE [LARGE SCALE MRNA]</scope>
    <source>
        <strain>cv. Columbia</strain>
    </source>
</reference>
<reference key="5">
    <citation type="submission" date="2004-09" db="EMBL/GenBank/DDBJ databases">
        <title>Large-scale analysis of RIKEN Arabidopsis full-length (RAFL) cDNAs.</title>
        <authorList>
            <person name="Totoki Y."/>
            <person name="Seki M."/>
            <person name="Ishida J."/>
            <person name="Nakajima M."/>
            <person name="Enju A."/>
            <person name="Kamiya A."/>
            <person name="Narusaka M."/>
            <person name="Shin-i T."/>
            <person name="Nakagawa M."/>
            <person name="Sakamoto N."/>
            <person name="Oishi K."/>
            <person name="Kohara Y."/>
            <person name="Kobayashi M."/>
            <person name="Toyoda A."/>
            <person name="Sakaki Y."/>
            <person name="Sakurai T."/>
            <person name="Iida K."/>
            <person name="Akiyama K."/>
            <person name="Satou M."/>
            <person name="Toyoda T."/>
            <person name="Konagaya A."/>
            <person name="Carninci P."/>
            <person name="Kawai J."/>
            <person name="Hayashizaki Y."/>
            <person name="Shinozaki K."/>
        </authorList>
    </citation>
    <scope>NUCLEOTIDE SEQUENCE [LARGE SCALE MRNA] OF 98-340</scope>
    <source>
        <strain>cv. Columbia</strain>
    </source>
</reference>
<reference key="6">
    <citation type="journal article" date="2003" name="Science">
        <title>Role of anthocyanidin reductase, encoded by BANYULS in plant flavonoid biosynthesis.</title>
        <authorList>
            <person name="Xie D.Y."/>
            <person name="Sharma S.B."/>
            <person name="Paiva N.L."/>
            <person name="Ferreira D."/>
            <person name="Dixon R.A."/>
        </authorList>
    </citation>
    <scope>FUNCTION</scope>
    <scope>CATALYTIC ACTIVITY</scope>
</reference>
<reference key="7">
    <citation type="journal article" date="2004" name="Arch. Biochem. Biophys.">
        <title>Anthocyanidin reductases from Medicago truncatula and Arabidopsis thaliana.</title>
        <authorList>
            <person name="Xie D.Y."/>
            <person name="Sharma S.B."/>
            <person name="Dixon R.A."/>
        </authorList>
    </citation>
    <scope>FUNCTION</scope>
    <scope>CATALYTIC ACTIVITY</scope>
    <scope>ACTIVITY REGULATION</scope>
    <scope>BIOPHYSICOCHEMICAL PROPERTIES</scope>
</reference>
<reference key="8">
    <citation type="journal article" date="2013" name="Plant Physiol. Biochem.">
        <title>The flavonoid biosynthetic pathway in Arabidopsis: Structural and genetic diversity.</title>
        <authorList>
            <person name="Saito K."/>
            <person name="Yonekura-Sakakibara K."/>
            <person name="Nakabayashi R."/>
            <person name="Higashi Y."/>
            <person name="Yamazaki M."/>
            <person name="Tohge T."/>
            <person name="Fernie A.R."/>
        </authorList>
    </citation>
    <scope>REVIEW</scope>
    <scope>NOMENCLATURE</scope>
</reference>
<dbReference type="EC" id="1.3.1.77" evidence="3 4"/>
<dbReference type="EMBL" id="AF092912">
    <property type="protein sequence ID" value="AAF23859.1"/>
    <property type="molecule type" value="mRNA"/>
</dbReference>
<dbReference type="EMBL" id="AC005882">
    <property type="protein sequence ID" value="AAD21417.1"/>
    <property type="molecule type" value="Genomic_DNA"/>
</dbReference>
<dbReference type="EMBL" id="CP002684">
    <property type="protein sequence ID" value="AEE33879.1"/>
    <property type="molecule type" value="Genomic_DNA"/>
</dbReference>
<dbReference type="EMBL" id="DQ446384">
    <property type="protein sequence ID" value="ABE65732.1"/>
    <property type="molecule type" value="mRNA"/>
</dbReference>
<dbReference type="EMBL" id="AK175960">
    <property type="protein sequence ID" value="BAD43723.1"/>
    <property type="molecule type" value="mRNA"/>
</dbReference>
<dbReference type="PIR" id="H96642">
    <property type="entry name" value="H96642"/>
</dbReference>
<dbReference type="RefSeq" id="NP_176365.1">
    <property type="nucleotide sequence ID" value="NM_104854.4"/>
</dbReference>
<dbReference type="SMR" id="Q9SEV0"/>
<dbReference type="FunCoup" id="Q9SEV0">
    <property type="interactions" value="122"/>
</dbReference>
<dbReference type="STRING" id="3702.Q9SEV0"/>
<dbReference type="PaxDb" id="3702-AT1G61720.1"/>
<dbReference type="ProteomicsDB" id="241210"/>
<dbReference type="EnsemblPlants" id="AT1G61720.1">
    <property type="protein sequence ID" value="AT1G61720.1"/>
    <property type="gene ID" value="AT1G61720"/>
</dbReference>
<dbReference type="GeneID" id="842469"/>
<dbReference type="Gramene" id="AT1G61720.1">
    <property type="protein sequence ID" value="AT1G61720.1"/>
    <property type="gene ID" value="AT1G61720"/>
</dbReference>
<dbReference type="KEGG" id="ath:AT1G61720"/>
<dbReference type="Araport" id="AT1G61720"/>
<dbReference type="TAIR" id="AT1G61720">
    <property type="gene designation" value="BAN"/>
</dbReference>
<dbReference type="eggNOG" id="KOG1502">
    <property type="taxonomic scope" value="Eukaryota"/>
</dbReference>
<dbReference type="HOGENOM" id="CLU_007383_9_0_1"/>
<dbReference type="InParanoid" id="Q9SEV0"/>
<dbReference type="OMA" id="ICCAYNT"/>
<dbReference type="PhylomeDB" id="Q9SEV0"/>
<dbReference type="BioCyc" id="ARA:AT1G61720-MONOMER"/>
<dbReference type="BRENDA" id="1.3.1.77">
    <property type="organism ID" value="399"/>
</dbReference>
<dbReference type="SABIO-RK" id="Q9SEV0"/>
<dbReference type="UniPathway" id="UPA00154"/>
<dbReference type="PRO" id="PR:Q9SEV0"/>
<dbReference type="Proteomes" id="UP000006548">
    <property type="component" value="Chromosome 1"/>
</dbReference>
<dbReference type="ExpressionAtlas" id="Q9SEV0">
    <property type="expression patterns" value="baseline and differential"/>
</dbReference>
<dbReference type="GO" id="GO:0033729">
    <property type="term" value="F:anthocyanidin reductase activity"/>
    <property type="evidence" value="ECO:0000314"/>
    <property type="project" value="TAIR"/>
</dbReference>
<dbReference type="GO" id="GO:0016491">
    <property type="term" value="F:oxidoreductase activity"/>
    <property type="evidence" value="ECO:0000250"/>
    <property type="project" value="TAIR"/>
</dbReference>
<dbReference type="GO" id="GO:0009813">
    <property type="term" value="P:flavonoid biosynthetic process"/>
    <property type="evidence" value="ECO:0007669"/>
    <property type="project" value="UniProtKB-UniPathway"/>
</dbReference>
<dbReference type="GO" id="GO:0009964">
    <property type="term" value="P:negative regulation of flavonoid biosynthetic process"/>
    <property type="evidence" value="ECO:0000315"/>
    <property type="project" value="TAIR"/>
</dbReference>
<dbReference type="CDD" id="cd08958">
    <property type="entry name" value="FR_SDR_e"/>
    <property type="match status" value="1"/>
</dbReference>
<dbReference type="FunFam" id="3.40.50.720:FF:000085">
    <property type="entry name" value="Dihydroflavonol reductase"/>
    <property type="match status" value="1"/>
</dbReference>
<dbReference type="Gene3D" id="3.40.50.720">
    <property type="entry name" value="NAD(P)-binding Rossmann-like Domain"/>
    <property type="match status" value="1"/>
</dbReference>
<dbReference type="InterPro" id="IPR001509">
    <property type="entry name" value="Epimerase_deHydtase"/>
</dbReference>
<dbReference type="InterPro" id="IPR036291">
    <property type="entry name" value="NAD(P)-bd_dom_sf"/>
</dbReference>
<dbReference type="InterPro" id="IPR050425">
    <property type="entry name" value="NAD(P)_dehydrat-like"/>
</dbReference>
<dbReference type="PANTHER" id="PTHR10366:SF288">
    <property type="entry name" value="ANTHOCYANIDIN REDUCTASE"/>
    <property type="match status" value="1"/>
</dbReference>
<dbReference type="PANTHER" id="PTHR10366">
    <property type="entry name" value="NAD DEPENDENT EPIMERASE/DEHYDRATASE"/>
    <property type="match status" value="1"/>
</dbReference>
<dbReference type="Pfam" id="PF01370">
    <property type="entry name" value="Epimerase"/>
    <property type="match status" value="1"/>
</dbReference>
<dbReference type="SUPFAM" id="SSF51735">
    <property type="entry name" value="NAD(P)-binding Rossmann-fold domains"/>
    <property type="match status" value="1"/>
</dbReference>
<protein>
    <recommendedName>
        <fullName>Anthocyanidin reductase</fullName>
        <shortName evidence="5">AtANR</shortName>
        <ecNumber evidence="3 4">1.3.1.77</ecNumber>
    </recommendedName>
    <alternativeName>
        <fullName>Anthocyanin spotted testa</fullName>
        <shortName>ast</shortName>
    </alternativeName>
    <alternativeName>
        <fullName>Protein BANYULS</fullName>
    </alternativeName>
</protein>
<gene>
    <name type="primary">BAN</name>
    <name type="synonym">ANR</name>
    <name type="ordered locus">At1g61720</name>
    <name type="ORF">T13M11.8</name>
</gene>
<organism>
    <name type="scientific">Arabidopsis thaliana</name>
    <name type="common">Mouse-ear cress</name>
    <dbReference type="NCBI Taxonomy" id="3702"/>
    <lineage>
        <taxon>Eukaryota</taxon>
        <taxon>Viridiplantae</taxon>
        <taxon>Streptophyta</taxon>
        <taxon>Embryophyta</taxon>
        <taxon>Tracheophyta</taxon>
        <taxon>Spermatophyta</taxon>
        <taxon>Magnoliopsida</taxon>
        <taxon>eudicotyledons</taxon>
        <taxon>Gunneridae</taxon>
        <taxon>Pentapetalae</taxon>
        <taxon>rosids</taxon>
        <taxon>malvids</taxon>
        <taxon>Brassicales</taxon>
        <taxon>Brassicaceae</taxon>
        <taxon>Camelineae</taxon>
        <taxon>Arabidopsis</taxon>
    </lineage>
</organism>